<accession>Q5QV36</accession>
<proteinExistence type="inferred from homology"/>
<dbReference type="EMBL" id="AE017340">
    <property type="protein sequence ID" value="AAV83289.1"/>
    <property type="molecule type" value="Genomic_DNA"/>
</dbReference>
<dbReference type="RefSeq" id="WP_011235682.1">
    <property type="nucleotide sequence ID" value="NC_006512.1"/>
</dbReference>
<dbReference type="SMR" id="Q5QV36"/>
<dbReference type="STRING" id="283942.IL2457"/>
<dbReference type="GeneID" id="41337651"/>
<dbReference type="KEGG" id="ilo:IL2457"/>
<dbReference type="eggNOG" id="COG1220">
    <property type="taxonomic scope" value="Bacteria"/>
</dbReference>
<dbReference type="HOGENOM" id="CLU_033123_0_0_6"/>
<dbReference type="OrthoDB" id="9804062at2"/>
<dbReference type="Proteomes" id="UP000001171">
    <property type="component" value="Chromosome"/>
</dbReference>
<dbReference type="GO" id="GO:0009376">
    <property type="term" value="C:HslUV protease complex"/>
    <property type="evidence" value="ECO:0007669"/>
    <property type="project" value="UniProtKB-UniRule"/>
</dbReference>
<dbReference type="GO" id="GO:0005524">
    <property type="term" value="F:ATP binding"/>
    <property type="evidence" value="ECO:0007669"/>
    <property type="project" value="UniProtKB-UniRule"/>
</dbReference>
<dbReference type="GO" id="GO:0016887">
    <property type="term" value="F:ATP hydrolysis activity"/>
    <property type="evidence" value="ECO:0007669"/>
    <property type="project" value="InterPro"/>
</dbReference>
<dbReference type="GO" id="GO:0008233">
    <property type="term" value="F:peptidase activity"/>
    <property type="evidence" value="ECO:0007669"/>
    <property type="project" value="InterPro"/>
</dbReference>
<dbReference type="GO" id="GO:0036402">
    <property type="term" value="F:proteasome-activating activity"/>
    <property type="evidence" value="ECO:0007669"/>
    <property type="project" value="UniProtKB-UniRule"/>
</dbReference>
<dbReference type="GO" id="GO:0043335">
    <property type="term" value="P:protein unfolding"/>
    <property type="evidence" value="ECO:0007669"/>
    <property type="project" value="UniProtKB-UniRule"/>
</dbReference>
<dbReference type="GO" id="GO:0051603">
    <property type="term" value="P:proteolysis involved in protein catabolic process"/>
    <property type="evidence" value="ECO:0007669"/>
    <property type="project" value="TreeGrafter"/>
</dbReference>
<dbReference type="CDD" id="cd19498">
    <property type="entry name" value="RecA-like_HslU"/>
    <property type="match status" value="1"/>
</dbReference>
<dbReference type="FunFam" id="1.10.8.10:FF:000028">
    <property type="entry name" value="ATP-dependent protease ATPase subunit HslU"/>
    <property type="match status" value="1"/>
</dbReference>
<dbReference type="FunFam" id="1.10.8.60:FF:000027">
    <property type="entry name" value="ATP-dependent protease ATPase subunit HslU"/>
    <property type="match status" value="1"/>
</dbReference>
<dbReference type="FunFam" id="3.40.50.300:FF:000213">
    <property type="entry name" value="ATP-dependent protease ATPase subunit HslU"/>
    <property type="match status" value="1"/>
</dbReference>
<dbReference type="FunFam" id="3.40.50.300:FF:000220">
    <property type="entry name" value="ATP-dependent protease ATPase subunit HslU"/>
    <property type="match status" value="1"/>
</dbReference>
<dbReference type="Gene3D" id="1.10.8.60">
    <property type="match status" value="1"/>
</dbReference>
<dbReference type="Gene3D" id="3.40.50.300">
    <property type="entry name" value="P-loop containing nucleotide triphosphate hydrolases"/>
    <property type="match status" value="2"/>
</dbReference>
<dbReference type="HAMAP" id="MF_00249">
    <property type="entry name" value="HslU"/>
    <property type="match status" value="1"/>
</dbReference>
<dbReference type="InterPro" id="IPR003593">
    <property type="entry name" value="AAA+_ATPase"/>
</dbReference>
<dbReference type="InterPro" id="IPR050052">
    <property type="entry name" value="ATP-dep_Clp_protease_ClpX"/>
</dbReference>
<dbReference type="InterPro" id="IPR003959">
    <property type="entry name" value="ATPase_AAA_core"/>
</dbReference>
<dbReference type="InterPro" id="IPR019489">
    <property type="entry name" value="Clp_ATPase_C"/>
</dbReference>
<dbReference type="InterPro" id="IPR004491">
    <property type="entry name" value="HslU"/>
</dbReference>
<dbReference type="InterPro" id="IPR027417">
    <property type="entry name" value="P-loop_NTPase"/>
</dbReference>
<dbReference type="NCBIfam" id="TIGR00390">
    <property type="entry name" value="hslU"/>
    <property type="match status" value="1"/>
</dbReference>
<dbReference type="NCBIfam" id="NF003544">
    <property type="entry name" value="PRK05201.1"/>
    <property type="match status" value="1"/>
</dbReference>
<dbReference type="PANTHER" id="PTHR48102">
    <property type="entry name" value="ATP-DEPENDENT CLP PROTEASE ATP-BINDING SUBUNIT CLPX-LIKE, MITOCHONDRIAL-RELATED"/>
    <property type="match status" value="1"/>
</dbReference>
<dbReference type="PANTHER" id="PTHR48102:SF3">
    <property type="entry name" value="ATP-DEPENDENT PROTEASE ATPASE SUBUNIT HSLU"/>
    <property type="match status" value="1"/>
</dbReference>
<dbReference type="Pfam" id="PF00004">
    <property type="entry name" value="AAA"/>
    <property type="match status" value="1"/>
</dbReference>
<dbReference type="Pfam" id="PF07724">
    <property type="entry name" value="AAA_2"/>
    <property type="match status" value="1"/>
</dbReference>
<dbReference type="SMART" id="SM00382">
    <property type="entry name" value="AAA"/>
    <property type="match status" value="1"/>
</dbReference>
<dbReference type="SMART" id="SM01086">
    <property type="entry name" value="ClpB_D2-small"/>
    <property type="match status" value="1"/>
</dbReference>
<dbReference type="SUPFAM" id="SSF52540">
    <property type="entry name" value="P-loop containing nucleoside triphosphate hydrolases"/>
    <property type="match status" value="1"/>
</dbReference>
<protein>
    <recommendedName>
        <fullName evidence="1">ATP-dependent protease ATPase subunit HslU</fullName>
    </recommendedName>
    <alternativeName>
        <fullName evidence="1">Unfoldase HslU</fullName>
    </alternativeName>
</protein>
<organism>
    <name type="scientific">Idiomarina loihiensis (strain ATCC BAA-735 / DSM 15497 / L2-TR)</name>
    <dbReference type="NCBI Taxonomy" id="283942"/>
    <lineage>
        <taxon>Bacteria</taxon>
        <taxon>Pseudomonadati</taxon>
        <taxon>Pseudomonadota</taxon>
        <taxon>Gammaproteobacteria</taxon>
        <taxon>Alteromonadales</taxon>
        <taxon>Idiomarinaceae</taxon>
        <taxon>Idiomarina</taxon>
    </lineage>
</organism>
<keyword id="KW-0067">ATP-binding</keyword>
<keyword id="KW-0143">Chaperone</keyword>
<keyword id="KW-0963">Cytoplasm</keyword>
<keyword id="KW-0547">Nucleotide-binding</keyword>
<keyword id="KW-1185">Reference proteome</keyword>
<sequence length="450" mass="50828">MSEMTPREIVDELNRHIIGQDKAKRAVAVALRNRWRRMQLDDELRQEVTPKNILMIGPTGVGKTEIARRLAKLARAPFIKVEATKFTEVGYVGKEIESIIKDLTDVAVKQTREEMMQKVRYRAEEAAEERILDVLLPPAKTSSSGWAQQQEETPENDDQRGTRQVFRKKLREGQLDDKEIEIDLAMPQMGVEIMAPPGMEEMTSQLQNMFQNMGSDKTKARKMRIKDAYKQLVDEEAAKLLNPDDVKEAAIESVEQNGIVFLDEIDKICKRGDTSGPDVSREGVQRDLLPLVEGTTVNTKHGMIKTDHILFIASGAFQMSKPSDLIPELQGRLPIRVELEALTSGDFVRILTEPSASLTTQYHALLNTEGVEVSFTEEGIQRIAEVAFHVNETTENIGARRLHTVLERLMEEISFHATDHSGEKLVIDADYVNEHVGELSQDEDLSRFIL</sequence>
<gene>
    <name evidence="1" type="primary">hslU</name>
    <name type="ordered locus">IL2457</name>
</gene>
<evidence type="ECO:0000255" key="1">
    <source>
        <dbReference type="HAMAP-Rule" id="MF_00249"/>
    </source>
</evidence>
<evidence type="ECO:0000256" key="2">
    <source>
        <dbReference type="SAM" id="MobiDB-lite"/>
    </source>
</evidence>
<comment type="function">
    <text evidence="1">ATPase subunit of a proteasome-like degradation complex; this subunit has chaperone activity. The binding of ATP and its subsequent hydrolysis by HslU are essential for unfolding of protein substrates subsequently hydrolyzed by HslV. HslU recognizes the N-terminal part of its protein substrates and unfolds these before they are guided to HslV for hydrolysis.</text>
</comment>
<comment type="subunit">
    <text evidence="1">A double ring-shaped homohexamer of HslV is capped on each side by a ring-shaped HslU homohexamer. The assembly of the HslU/HslV complex is dependent on binding of ATP.</text>
</comment>
<comment type="subcellular location">
    <subcellularLocation>
        <location evidence="1">Cytoplasm</location>
    </subcellularLocation>
</comment>
<comment type="similarity">
    <text evidence="1">Belongs to the ClpX chaperone family. HslU subfamily.</text>
</comment>
<feature type="chain" id="PRO_0000160511" description="ATP-dependent protease ATPase subunit HslU">
    <location>
        <begin position="1"/>
        <end position="450"/>
    </location>
</feature>
<feature type="region of interest" description="Disordered" evidence="2">
    <location>
        <begin position="140"/>
        <end position="162"/>
    </location>
</feature>
<feature type="compositionally biased region" description="Polar residues" evidence="2">
    <location>
        <begin position="140"/>
        <end position="151"/>
    </location>
</feature>
<feature type="binding site" evidence="1">
    <location>
        <position position="18"/>
    </location>
    <ligand>
        <name>ATP</name>
        <dbReference type="ChEBI" id="CHEBI:30616"/>
    </ligand>
</feature>
<feature type="binding site" evidence="1">
    <location>
        <begin position="60"/>
        <end position="65"/>
    </location>
    <ligand>
        <name>ATP</name>
        <dbReference type="ChEBI" id="CHEBI:30616"/>
    </ligand>
</feature>
<feature type="binding site" evidence="1">
    <location>
        <position position="263"/>
    </location>
    <ligand>
        <name>ATP</name>
        <dbReference type="ChEBI" id="CHEBI:30616"/>
    </ligand>
</feature>
<feature type="binding site" evidence="1">
    <location>
        <position position="328"/>
    </location>
    <ligand>
        <name>ATP</name>
        <dbReference type="ChEBI" id="CHEBI:30616"/>
    </ligand>
</feature>
<feature type="binding site" evidence="1">
    <location>
        <position position="400"/>
    </location>
    <ligand>
        <name>ATP</name>
        <dbReference type="ChEBI" id="CHEBI:30616"/>
    </ligand>
</feature>
<name>HSLU_IDILO</name>
<reference key="1">
    <citation type="journal article" date="2004" name="Proc. Natl. Acad. Sci. U.S.A.">
        <title>Genome sequence of the deep-sea gamma-proteobacterium Idiomarina loihiensis reveals amino acid fermentation as a source of carbon and energy.</title>
        <authorList>
            <person name="Hou S."/>
            <person name="Saw J.H."/>
            <person name="Lee K.S."/>
            <person name="Freitas T.A."/>
            <person name="Belisle C."/>
            <person name="Kawarabayasi Y."/>
            <person name="Donachie S.P."/>
            <person name="Pikina A."/>
            <person name="Galperin M.Y."/>
            <person name="Koonin E.V."/>
            <person name="Makarova K.S."/>
            <person name="Omelchenko M.V."/>
            <person name="Sorokin A."/>
            <person name="Wolf Y.I."/>
            <person name="Li Q.X."/>
            <person name="Keum Y.S."/>
            <person name="Campbell S."/>
            <person name="Denery J."/>
            <person name="Aizawa S."/>
            <person name="Shibata S."/>
            <person name="Malahoff A."/>
            <person name="Alam M."/>
        </authorList>
    </citation>
    <scope>NUCLEOTIDE SEQUENCE [LARGE SCALE GENOMIC DNA]</scope>
    <source>
        <strain>ATCC BAA-735 / DSM 15497 / L2-TR</strain>
    </source>
</reference>